<reference key="1">
    <citation type="submission" date="2008-02" db="EMBL/GenBank/DDBJ databases">
        <title>Complete sequence of Escherichia coli C str. ATCC 8739.</title>
        <authorList>
            <person name="Copeland A."/>
            <person name="Lucas S."/>
            <person name="Lapidus A."/>
            <person name="Glavina del Rio T."/>
            <person name="Dalin E."/>
            <person name="Tice H."/>
            <person name="Bruce D."/>
            <person name="Goodwin L."/>
            <person name="Pitluck S."/>
            <person name="Kiss H."/>
            <person name="Brettin T."/>
            <person name="Detter J.C."/>
            <person name="Han C."/>
            <person name="Kuske C.R."/>
            <person name="Schmutz J."/>
            <person name="Larimer F."/>
            <person name="Land M."/>
            <person name="Hauser L."/>
            <person name="Kyrpides N."/>
            <person name="Mikhailova N."/>
            <person name="Ingram L."/>
            <person name="Richardson P."/>
        </authorList>
    </citation>
    <scope>NUCLEOTIDE SEQUENCE [LARGE SCALE GENOMIC DNA]</scope>
    <source>
        <strain>ATCC 8739 / DSM 1576 / NBRC 3972 / NCIMB 8545 / WDCM 00012 / Crooks</strain>
    </source>
</reference>
<name>GCSH_ECOLC</name>
<keyword id="KW-0450">Lipoyl</keyword>
<feature type="chain" id="PRO_1000078731" description="Glycine cleavage system H protein">
    <location>
        <begin position="1"/>
        <end position="129"/>
    </location>
</feature>
<feature type="domain" description="Lipoyl-binding" evidence="2">
    <location>
        <begin position="24"/>
        <end position="106"/>
    </location>
</feature>
<feature type="modified residue" description="N6-lipoyllysine" evidence="1">
    <location>
        <position position="65"/>
    </location>
</feature>
<evidence type="ECO:0000255" key="1">
    <source>
        <dbReference type="HAMAP-Rule" id="MF_00272"/>
    </source>
</evidence>
<evidence type="ECO:0000255" key="2">
    <source>
        <dbReference type="PROSITE-ProRule" id="PRU01066"/>
    </source>
</evidence>
<accession>B1IT98</accession>
<comment type="function">
    <text evidence="1">The glycine cleavage system catalyzes the degradation of glycine. The H protein shuttles the methylamine group of glycine from the P protein to the T protein.</text>
</comment>
<comment type="cofactor">
    <cofactor evidence="1">
        <name>(R)-lipoate</name>
        <dbReference type="ChEBI" id="CHEBI:83088"/>
    </cofactor>
    <text evidence="1">Binds 1 lipoyl cofactor covalently.</text>
</comment>
<comment type="subunit">
    <text evidence="1">The glycine cleavage system is composed of four proteins: P, T, L and H.</text>
</comment>
<comment type="similarity">
    <text evidence="1">Belongs to the GcvH family.</text>
</comment>
<organism>
    <name type="scientific">Escherichia coli (strain ATCC 8739 / DSM 1576 / NBRC 3972 / NCIMB 8545 / WDCM 00012 / Crooks)</name>
    <dbReference type="NCBI Taxonomy" id="481805"/>
    <lineage>
        <taxon>Bacteria</taxon>
        <taxon>Pseudomonadati</taxon>
        <taxon>Pseudomonadota</taxon>
        <taxon>Gammaproteobacteria</taxon>
        <taxon>Enterobacterales</taxon>
        <taxon>Enterobacteriaceae</taxon>
        <taxon>Escherichia</taxon>
    </lineage>
</organism>
<proteinExistence type="inferred from homology"/>
<dbReference type="EMBL" id="CP000946">
    <property type="protein sequence ID" value="ACA76477.1"/>
    <property type="molecule type" value="Genomic_DNA"/>
</dbReference>
<dbReference type="RefSeq" id="WP_001295377.1">
    <property type="nucleotide sequence ID" value="NZ_MTFT01000004.1"/>
</dbReference>
<dbReference type="SMR" id="B1IT98"/>
<dbReference type="GeneID" id="93779098"/>
<dbReference type="KEGG" id="ecl:EcolC_0805"/>
<dbReference type="HOGENOM" id="CLU_097408_2_1_6"/>
<dbReference type="GO" id="GO:0005829">
    <property type="term" value="C:cytosol"/>
    <property type="evidence" value="ECO:0007669"/>
    <property type="project" value="TreeGrafter"/>
</dbReference>
<dbReference type="GO" id="GO:0005960">
    <property type="term" value="C:glycine cleavage complex"/>
    <property type="evidence" value="ECO:0007669"/>
    <property type="project" value="InterPro"/>
</dbReference>
<dbReference type="GO" id="GO:0019464">
    <property type="term" value="P:glycine decarboxylation via glycine cleavage system"/>
    <property type="evidence" value="ECO:0007669"/>
    <property type="project" value="UniProtKB-UniRule"/>
</dbReference>
<dbReference type="CDD" id="cd06848">
    <property type="entry name" value="GCS_H"/>
    <property type="match status" value="1"/>
</dbReference>
<dbReference type="FunFam" id="2.40.50.100:FF:000011">
    <property type="entry name" value="Glycine cleavage system H protein"/>
    <property type="match status" value="1"/>
</dbReference>
<dbReference type="Gene3D" id="2.40.50.100">
    <property type="match status" value="1"/>
</dbReference>
<dbReference type="HAMAP" id="MF_00272">
    <property type="entry name" value="GcvH"/>
    <property type="match status" value="1"/>
</dbReference>
<dbReference type="InterPro" id="IPR003016">
    <property type="entry name" value="2-oxoA_DH_lipoyl-BS"/>
</dbReference>
<dbReference type="InterPro" id="IPR000089">
    <property type="entry name" value="Biotin_lipoyl"/>
</dbReference>
<dbReference type="InterPro" id="IPR002930">
    <property type="entry name" value="GCV_H"/>
</dbReference>
<dbReference type="InterPro" id="IPR033753">
    <property type="entry name" value="GCV_H/Fam206"/>
</dbReference>
<dbReference type="InterPro" id="IPR017453">
    <property type="entry name" value="GCV_H_sub"/>
</dbReference>
<dbReference type="InterPro" id="IPR011053">
    <property type="entry name" value="Single_hybrid_motif"/>
</dbReference>
<dbReference type="NCBIfam" id="TIGR00527">
    <property type="entry name" value="gcvH"/>
    <property type="match status" value="1"/>
</dbReference>
<dbReference type="NCBIfam" id="NF002270">
    <property type="entry name" value="PRK01202.1"/>
    <property type="match status" value="1"/>
</dbReference>
<dbReference type="PANTHER" id="PTHR11715">
    <property type="entry name" value="GLYCINE CLEAVAGE SYSTEM H PROTEIN"/>
    <property type="match status" value="1"/>
</dbReference>
<dbReference type="PANTHER" id="PTHR11715:SF3">
    <property type="entry name" value="GLYCINE CLEAVAGE SYSTEM H PROTEIN-RELATED"/>
    <property type="match status" value="1"/>
</dbReference>
<dbReference type="Pfam" id="PF01597">
    <property type="entry name" value="GCV_H"/>
    <property type="match status" value="1"/>
</dbReference>
<dbReference type="SUPFAM" id="SSF51230">
    <property type="entry name" value="Single hybrid motif"/>
    <property type="match status" value="1"/>
</dbReference>
<dbReference type="PROSITE" id="PS50968">
    <property type="entry name" value="BIOTINYL_LIPOYL"/>
    <property type="match status" value="1"/>
</dbReference>
<dbReference type="PROSITE" id="PS00189">
    <property type="entry name" value="LIPOYL"/>
    <property type="match status" value="1"/>
</dbReference>
<sequence length="129" mass="13811">MSNVPAELKYSKEHEWLRKEADGTYTVGITEHAQELLGDMVFVDLPEVGATVSAGDDCAVAESVKAASDIYAPVSGEIVAVNDALSDSPELVNSEPYAGGWIFKIKASDESELESLLDATAYEALLEDE</sequence>
<gene>
    <name evidence="1" type="primary">gcvH</name>
    <name type="ordered locus">EcolC_0805</name>
</gene>
<protein>
    <recommendedName>
        <fullName evidence="1">Glycine cleavage system H protein</fullName>
    </recommendedName>
</protein>